<proteinExistence type="evidence at protein level"/>
<comment type="function">
    <text evidence="1">Promotes RNA polymerase assembly. Latches the N- and C-terminal regions of the beta' subunit thereby facilitating its interaction with the beta and alpha subunits.</text>
</comment>
<comment type="catalytic activity">
    <reaction evidence="1">
        <text>RNA(n) + a ribonucleoside 5'-triphosphate = RNA(n+1) + diphosphate</text>
        <dbReference type="Rhea" id="RHEA:21248"/>
        <dbReference type="Rhea" id="RHEA-COMP:14527"/>
        <dbReference type="Rhea" id="RHEA-COMP:17342"/>
        <dbReference type="ChEBI" id="CHEBI:33019"/>
        <dbReference type="ChEBI" id="CHEBI:61557"/>
        <dbReference type="ChEBI" id="CHEBI:140395"/>
        <dbReference type="EC" id="2.7.7.6"/>
    </reaction>
</comment>
<comment type="subunit">
    <text evidence="1">In cyanobacteria the RNAP catalytic core is composed of 2 alpha, 1 beta, 1 beta', 1 gamma and 1 omega subunit. When a sigma factor is associated with the core the holoenzyme is formed, which can initiate transcription.</text>
</comment>
<comment type="similarity">
    <text evidence="1">Belongs to the RNA polymerase subunit omega family.</text>
</comment>
<sequence length="76" mass="8778">MLQRFDLDSQDLLFKAESLIVNSTNRYHVTLQIARRAKQARYEEMENLSEETGIKPVLRAILEMSDELNQPEIIGG</sequence>
<evidence type="ECO:0000255" key="1">
    <source>
        <dbReference type="HAMAP-Rule" id="MF_00366"/>
    </source>
</evidence>
<evidence type="ECO:0007829" key="2">
    <source>
        <dbReference type="PDB" id="8SYI"/>
    </source>
</evidence>
<evidence type="ECO:0007829" key="3">
    <source>
        <dbReference type="PDB" id="8URW"/>
    </source>
</evidence>
<keyword id="KW-0002">3D-structure</keyword>
<keyword id="KW-0240">DNA-directed RNA polymerase</keyword>
<keyword id="KW-0548">Nucleotidyltransferase</keyword>
<keyword id="KW-1185">Reference proteome</keyword>
<keyword id="KW-0804">Transcription</keyword>
<keyword id="KW-0808">Transferase</keyword>
<organism>
    <name type="scientific">Synechococcus elongatus (strain ATCC 33912 / PCC 7942 / FACHB-805)</name>
    <name type="common">Anacystis nidulans R2</name>
    <dbReference type="NCBI Taxonomy" id="1140"/>
    <lineage>
        <taxon>Bacteria</taxon>
        <taxon>Bacillati</taxon>
        <taxon>Cyanobacteriota</taxon>
        <taxon>Cyanophyceae</taxon>
        <taxon>Synechococcales</taxon>
        <taxon>Synechococcaceae</taxon>
        <taxon>Synechococcus</taxon>
    </lineage>
</organism>
<protein>
    <recommendedName>
        <fullName evidence="1">DNA-directed RNA polymerase subunit omega</fullName>
        <shortName evidence="1">RNAP omega subunit</shortName>
        <ecNumber evidence="1">2.7.7.6</ecNumber>
    </recommendedName>
    <alternativeName>
        <fullName evidence="1">RNA polymerase omega subunit</fullName>
    </alternativeName>
    <alternativeName>
        <fullName evidence="1">Transcriptase subunit omega</fullName>
    </alternativeName>
</protein>
<accession>Q31MH9</accession>
<reference key="1">
    <citation type="submission" date="2005-08" db="EMBL/GenBank/DDBJ databases">
        <title>Complete sequence of chromosome 1 of Synechococcus elongatus PCC 7942.</title>
        <authorList>
            <consortium name="US DOE Joint Genome Institute"/>
            <person name="Copeland A."/>
            <person name="Lucas S."/>
            <person name="Lapidus A."/>
            <person name="Barry K."/>
            <person name="Detter J.C."/>
            <person name="Glavina T."/>
            <person name="Hammon N."/>
            <person name="Israni S."/>
            <person name="Pitluck S."/>
            <person name="Schmutz J."/>
            <person name="Larimer F."/>
            <person name="Land M."/>
            <person name="Kyrpides N."/>
            <person name="Lykidis A."/>
            <person name="Golden S."/>
            <person name="Richardson P."/>
        </authorList>
    </citation>
    <scope>NUCLEOTIDE SEQUENCE [LARGE SCALE GENOMIC DNA]</scope>
    <source>
        <strain>ATCC 33912 / PCC 7942 / FACHB-805</strain>
    </source>
</reference>
<feature type="chain" id="PRO_0000237521" description="DNA-directed RNA polymerase subunit omega">
    <location>
        <begin position="1"/>
        <end position="76"/>
    </location>
</feature>
<feature type="helix" evidence="3">
    <location>
        <begin position="9"/>
        <end position="21"/>
    </location>
</feature>
<feature type="helix" evidence="3">
    <location>
        <begin position="26"/>
        <end position="46"/>
    </location>
</feature>
<feature type="turn" evidence="2">
    <location>
        <begin position="50"/>
        <end position="53"/>
    </location>
</feature>
<feature type="helix" evidence="3">
    <location>
        <begin position="56"/>
        <end position="68"/>
    </location>
</feature>
<dbReference type="EC" id="2.7.7.6" evidence="1"/>
<dbReference type="EMBL" id="CP000100">
    <property type="protein sequence ID" value="ABB57740.1"/>
    <property type="molecule type" value="Genomic_DNA"/>
</dbReference>
<dbReference type="RefSeq" id="WP_011244691.1">
    <property type="nucleotide sequence ID" value="NZ_JACJTX010000001.1"/>
</dbReference>
<dbReference type="PDB" id="8SYI">
    <property type="method" value="EM"/>
    <property type="resolution" value="2.94 A"/>
    <property type="chains" value="E=1-76"/>
</dbReference>
<dbReference type="PDB" id="8URW">
    <property type="method" value="EM"/>
    <property type="resolution" value="2.79 A"/>
    <property type="chains" value="E=1-76"/>
</dbReference>
<dbReference type="PDBsum" id="8SYI"/>
<dbReference type="PDBsum" id="8URW"/>
<dbReference type="EMDB" id="EMD-40874"/>
<dbReference type="EMDB" id="EMD-42502"/>
<dbReference type="SMR" id="Q31MH9"/>
<dbReference type="STRING" id="1140.Synpcc7942_1710"/>
<dbReference type="PaxDb" id="1140-Synpcc7942_1710"/>
<dbReference type="KEGG" id="syf:Synpcc7942_1710"/>
<dbReference type="eggNOG" id="ENOG5032RMS">
    <property type="taxonomic scope" value="Bacteria"/>
</dbReference>
<dbReference type="HOGENOM" id="CLU_175526_0_0_3"/>
<dbReference type="OrthoDB" id="463386at2"/>
<dbReference type="BioCyc" id="SYNEL:SYNPCC7942_1710-MONOMER"/>
<dbReference type="Proteomes" id="UP000889800">
    <property type="component" value="Chromosome"/>
</dbReference>
<dbReference type="GO" id="GO:0000428">
    <property type="term" value="C:DNA-directed RNA polymerase complex"/>
    <property type="evidence" value="ECO:0007669"/>
    <property type="project" value="UniProtKB-KW"/>
</dbReference>
<dbReference type="GO" id="GO:0003677">
    <property type="term" value="F:DNA binding"/>
    <property type="evidence" value="ECO:0007669"/>
    <property type="project" value="UniProtKB-UniRule"/>
</dbReference>
<dbReference type="GO" id="GO:0003899">
    <property type="term" value="F:DNA-directed RNA polymerase activity"/>
    <property type="evidence" value="ECO:0007669"/>
    <property type="project" value="UniProtKB-UniRule"/>
</dbReference>
<dbReference type="GO" id="GO:0006351">
    <property type="term" value="P:DNA-templated transcription"/>
    <property type="evidence" value="ECO:0007669"/>
    <property type="project" value="UniProtKB-UniRule"/>
</dbReference>
<dbReference type="HAMAP" id="MF_00366">
    <property type="entry name" value="RNApol_bact_RpoZ"/>
    <property type="match status" value="1"/>
</dbReference>
<dbReference type="InterPro" id="IPR003716">
    <property type="entry name" value="DNA-dir_RNA_pol_omega"/>
</dbReference>
<dbReference type="InterPro" id="IPR006110">
    <property type="entry name" value="Pol_omega/Rpo6/RPB6"/>
</dbReference>
<dbReference type="InterPro" id="IPR036161">
    <property type="entry name" value="RPB6/omega-like_sf"/>
</dbReference>
<dbReference type="NCBIfam" id="NF001574">
    <property type="entry name" value="PRK00392.2-5"/>
    <property type="match status" value="1"/>
</dbReference>
<dbReference type="Pfam" id="PF01192">
    <property type="entry name" value="RNA_pol_Rpb6"/>
    <property type="match status" value="1"/>
</dbReference>
<dbReference type="SUPFAM" id="SSF63562">
    <property type="entry name" value="RPB6/omega subunit-like"/>
    <property type="match status" value="1"/>
</dbReference>
<gene>
    <name evidence="1" type="primary">rpoZ</name>
    <name type="ordered locus">Synpcc7942_1710</name>
</gene>
<name>RPOZ_SYNE7</name>